<proteinExistence type="inferred from homology"/>
<accession>Q9ZBL1</accession>
<organism>
    <name type="scientific">Mycobacterium leprae (strain TN)</name>
    <dbReference type="NCBI Taxonomy" id="272631"/>
    <lineage>
        <taxon>Bacteria</taxon>
        <taxon>Bacillati</taxon>
        <taxon>Actinomycetota</taxon>
        <taxon>Actinomycetes</taxon>
        <taxon>Mycobacteriales</taxon>
        <taxon>Mycobacteriaceae</taxon>
        <taxon>Mycobacterium</taxon>
    </lineage>
</organism>
<sequence length="279" mass="28983">MNYLPAPPPGTTPLRVLSIAGSDSGGGAGIQADMRTMTVLGVHACTAVTAVTIQNTLGVEGFHEIPAEIVASQIKAVVTDIGIQSAKTGMLASSSIIAAVAETWLRLELTTPLVVDPVCASMHGDPLLTGEAMDSLRDRLFPLATVVTPNLDEVRLLVGIDVVDTESQRAAAMALHALGPQWALVKGGHLRSSDRSCDLLYGGSSAGVAFHEFDAPRVQTGNDHGGGDTLAAAVSCALAHGYTVPDAVGFGKRWVTECLRDAYPLGRGHGPVSPLFQRT</sequence>
<name>THID_MYCLE</name>
<comment type="function">
    <text evidence="2">Catalyzes the phosphorylation of hydroxymethylpyrimidine phosphate (HMP-P) to HMP-PP, and of HMP to HMP-P.</text>
</comment>
<comment type="catalytic activity">
    <reaction evidence="2">
        <text>4-amino-5-hydroxymethyl-2-methylpyrimidine + ATP = 4-amino-2-methyl-5-(phosphooxymethyl)pyrimidine + ADP + H(+)</text>
        <dbReference type="Rhea" id="RHEA:23096"/>
        <dbReference type="ChEBI" id="CHEBI:15378"/>
        <dbReference type="ChEBI" id="CHEBI:16892"/>
        <dbReference type="ChEBI" id="CHEBI:30616"/>
        <dbReference type="ChEBI" id="CHEBI:58354"/>
        <dbReference type="ChEBI" id="CHEBI:456216"/>
        <dbReference type="EC" id="2.7.1.49"/>
    </reaction>
</comment>
<comment type="catalytic activity">
    <reaction evidence="2">
        <text>4-amino-2-methyl-5-(phosphooxymethyl)pyrimidine + ATP = 4-amino-2-methyl-5-(diphosphooxymethyl)pyrimidine + ADP</text>
        <dbReference type="Rhea" id="RHEA:19893"/>
        <dbReference type="ChEBI" id="CHEBI:30616"/>
        <dbReference type="ChEBI" id="CHEBI:57841"/>
        <dbReference type="ChEBI" id="CHEBI:58354"/>
        <dbReference type="ChEBI" id="CHEBI:456216"/>
        <dbReference type="EC" id="2.7.4.7"/>
    </reaction>
</comment>
<comment type="pathway">
    <text>Cofactor biosynthesis; thiamine diphosphate biosynthesis; 4-amino-2-methyl-5-diphosphomethylpyrimidine from 5-amino-1-(5-phospho-D-ribosyl)imidazole: step 2/3.</text>
</comment>
<comment type="pathway">
    <text>Cofactor biosynthesis; thiamine diphosphate biosynthesis; 4-amino-2-methyl-5-diphosphomethylpyrimidine from 5-amino-1-(5-phospho-D-ribosyl)imidazole: step 3/3.</text>
</comment>
<comment type="similarity">
    <text evidence="3">Belongs to the ThiD family.</text>
</comment>
<gene>
    <name type="primary">thiD</name>
    <name type="ordered locus">ML0295</name>
    <name type="ORF">MLCB1450.27c</name>
</gene>
<protein>
    <recommendedName>
        <fullName>Hydroxymethylpyrimidine/phosphomethylpyrimidine kinase</fullName>
        <ecNumber evidence="2">2.7.1.49</ecNumber>
        <ecNumber evidence="2">2.7.4.7</ecNumber>
    </recommendedName>
    <alternativeName>
        <fullName>Hydroxymethylpyrimidine kinase</fullName>
        <shortName>HMP kinase</shortName>
    </alternativeName>
    <alternativeName>
        <fullName>Hydroxymethylpyrimidine phosphate kinase</fullName>
        <shortName>HMP-P kinase</shortName>
        <shortName>HMP-phosphate kinase</shortName>
        <shortName>HMPP kinase</shortName>
    </alternativeName>
</protein>
<feature type="chain" id="PRO_0000192022" description="Hydroxymethylpyrimidine/phosphomethylpyrimidine kinase">
    <location>
        <begin position="1"/>
        <end position="279"/>
    </location>
</feature>
<feature type="binding site" evidence="1">
    <location>
        <position position="54"/>
    </location>
    <ligand>
        <name>4-amino-5-hydroxymethyl-2-methylpyrimidine</name>
        <dbReference type="ChEBI" id="CHEBI:16892"/>
    </ligand>
</feature>
<reference key="1">
    <citation type="journal article" date="2001" name="Nature">
        <title>Massive gene decay in the leprosy bacillus.</title>
        <authorList>
            <person name="Cole S.T."/>
            <person name="Eiglmeier K."/>
            <person name="Parkhill J."/>
            <person name="James K.D."/>
            <person name="Thomson N.R."/>
            <person name="Wheeler P.R."/>
            <person name="Honore N."/>
            <person name="Garnier T."/>
            <person name="Churcher C.M."/>
            <person name="Harris D.E."/>
            <person name="Mungall K.L."/>
            <person name="Basham D."/>
            <person name="Brown D."/>
            <person name="Chillingworth T."/>
            <person name="Connor R."/>
            <person name="Davies R.M."/>
            <person name="Devlin K."/>
            <person name="Duthoy S."/>
            <person name="Feltwell T."/>
            <person name="Fraser A."/>
            <person name="Hamlin N."/>
            <person name="Holroyd S."/>
            <person name="Hornsby T."/>
            <person name="Jagels K."/>
            <person name="Lacroix C."/>
            <person name="Maclean J."/>
            <person name="Moule S."/>
            <person name="Murphy L.D."/>
            <person name="Oliver K."/>
            <person name="Quail M.A."/>
            <person name="Rajandream M.A."/>
            <person name="Rutherford K.M."/>
            <person name="Rutter S."/>
            <person name="Seeger K."/>
            <person name="Simon S."/>
            <person name="Simmonds M."/>
            <person name="Skelton J."/>
            <person name="Squares R."/>
            <person name="Squares S."/>
            <person name="Stevens K."/>
            <person name="Taylor K."/>
            <person name="Whitehead S."/>
            <person name="Woodward J.R."/>
            <person name="Barrell B.G."/>
        </authorList>
    </citation>
    <scope>NUCLEOTIDE SEQUENCE [LARGE SCALE GENOMIC DNA]</scope>
    <source>
        <strain>TN</strain>
    </source>
</reference>
<dbReference type="EC" id="2.7.1.49" evidence="2"/>
<dbReference type="EC" id="2.7.4.7" evidence="2"/>
<dbReference type="EMBL" id="AL035159">
    <property type="protein sequence ID" value="CAA22711.1"/>
    <property type="molecule type" value="Genomic_DNA"/>
</dbReference>
<dbReference type="EMBL" id="AL583918">
    <property type="protein sequence ID" value="CAC29803.1"/>
    <property type="molecule type" value="Genomic_DNA"/>
</dbReference>
<dbReference type="PIR" id="T44742">
    <property type="entry name" value="T44742"/>
</dbReference>
<dbReference type="RefSeq" id="NP_301332.1">
    <property type="nucleotide sequence ID" value="NC_002677.1"/>
</dbReference>
<dbReference type="RefSeq" id="WP_010907656.1">
    <property type="nucleotide sequence ID" value="NC_002677.1"/>
</dbReference>
<dbReference type="SMR" id="Q9ZBL1"/>
<dbReference type="STRING" id="272631.gene:17574114"/>
<dbReference type="KEGG" id="mle:ML0295"/>
<dbReference type="PATRIC" id="fig|272631.5.peg.463"/>
<dbReference type="Leproma" id="ML0295"/>
<dbReference type="eggNOG" id="COG0351">
    <property type="taxonomic scope" value="Bacteria"/>
</dbReference>
<dbReference type="HOGENOM" id="CLU_020520_0_0_11"/>
<dbReference type="OrthoDB" id="34166at2"/>
<dbReference type="UniPathway" id="UPA00060">
    <property type="reaction ID" value="UER00137"/>
</dbReference>
<dbReference type="UniPathway" id="UPA00060">
    <property type="reaction ID" value="UER00138"/>
</dbReference>
<dbReference type="Proteomes" id="UP000000806">
    <property type="component" value="Chromosome"/>
</dbReference>
<dbReference type="GO" id="GO:0005829">
    <property type="term" value="C:cytosol"/>
    <property type="evidence" value="ECO:0007669"/>
    <property type="project" value="TreeGrafter"/>
</dbReference>
<dbReference type="GO" id="GO:0005524">
    <property type="term" value="F:ATP binding"/>
    <property type="evidence" value="ECO:0007669"/>
    <property type="project" value="UniProtKB-KW"/>
</dbReference>
<dbReference type="GO" id="GO:0008902">
    <property type="term" value="F:hydroxymethylpyrimidine kinase activity"/>
    <property type="evidence" value="ECO:0007669"/>
    <property type="project" value="UniProtKB-EC"/>
</dbReference>
<dbReference type="GO" id="GO:0008972">
    <property type="term" value="F:phosphomethylpyrimidine kinase activity"/>
    <property type="evidence" value="ECO:0007669"/>
    <property type="project" value="UniProtKB-EC"/>
</dbReference>
<dbReference type="GO" id="GO:0009228">
    <property type="term" value="P:thiamine biosynthetic process"/>
    <property type="evidence" value="ECO:0007669"/>
    <property type="project" value="UniProtKB-KW"/>
</dbReference>
<dbReference type="GO" id="GO:0009229">
    <property type="term" value="P:thiamine diphosphate biosynthetic process"/>
    <property type="evidence" value="ECO:0007669"/>
    <property type="project" value="UniProtKB-UniPathway"/>
</dbReference>
<dbReference type="CDD" id="cd01169">
    <property type="entry name" value="HMPP_kinase"/>
    <property type="match status" value="1"/>
</dbReference>
<dbReference type="FunFam" id="3.40.1190.20:FF:000003">
    <property type="entry name" value="Phosphomethylpyrimidine kinase ThiD"/>
    <property type="match status" value="1"/>
</dbReference>
<dbReference type="Gene3D" id="3.40.1190.20">
    <property type="match status" value="1"/>
</dbReference>
<dbReference type="InterPro" id="IPR004399">
    <property type="entry name" value="HMP/HMP-P_kinase_dom"/>
</dbReference>
<dbReference type="InterPro" id="IPR013749">
    <property type="entry name" value="PM/HMP-P_kinase-1"/>
</dbReference>
<dbReference type="InterPro" id="IPR029056">
    <property type="entry name" value="Ribokinase-like"/>
</dbReference>
<dbReference type="NCBIfam" id="TIGR00097">
    <property type="entry name" value="HMP-P_kinase"/>
    <property type="match status" value="1"/>
</dbReference>
<dbReference type="PANTHER" id="PTHR20858:SF17">
    <property type="entry name" value="HYDROXYMETHYLPYRIMIDINE_PHOSPHOMETHYLPYRIMIDINE KINASE THI20-RELATED"/>
    <property type="match status" value="1"/>
</dbReference>
<dbReference type="PANTHER" id="PTHR20858">
    <property type="entry name" value="PHOSPHOMETHYLPYRIMIDINE KINASE"/>
    <property type="match status" value="1"/>
</dbReference>
<dbReference type="Pfam" id="PF08543">
    <property type="entry name" value="Phos_pyr_kin"/>
    <property type="match status" value="1"/>
</dbReference>
<dbReference type="SUPFAM" id="SSF53613">
    <property type="entry name" value="Ribokinase-like"/>
    <property type="match status" value="1"/>
</dbReference>
<evidence type="ECO:0000250" key="1"/>
<evidence type="ECO:0000250" key="2">
    <source>
        <dbReference type="UniProtKB" id="P76422"/>
    </source>
</evidence>
<evidence type="ECO:0000305" key="3"/>
<keyword id="KW-0067">ATP-binding</keyword>
<keyword id="KW-0418">Kinase</keyword>
<keyword id="KW-0547">Nucleotide-binding</keyword>
<keyword id="KW-1185">Reference proteome</keyword>
<keyword id="KW-0784">Thiamine biosynthesis</keyword>
<keyword id="KW-0808">Transferase</keyword>